<reference key="1">
    <citation type="journal article" date="2006" name="BMC Genomics">
        <title>Comparative genome analysis: selection pressure on the Borrelia vls cassettes is essential for infectivity.</title>
        <authorList>
            <person name="Gloeckner G."/>
            <person name="Schulte-Spechtel U."/>
            <person name="Schilhabel M."/>
            <person name="Felder M."/>
            <person name="Suehnel J."/>
            <person name="Wilske B."/>
            <person name="Platzer M."/>
        </authorList>
    </citation>
    <scope>NUCLEOTIDE SEQUENCE [LARGE SCALE GENOMIC DNA]</scope>
    <source>
        <strain>PKo</strain>
    </source>
</reference>
<reference key="2">
    <citation type="journal article" date="2011" name="J. Bacteriol.">
        <title>Whole-genome sequences of two Borrelia afzelii and two Borrelia garinii Lyme disease agent isolates.</title>
        <authorList>
            <person name="Casjens S.R."/>
            <person name="Mongodin E.F."/>
            <person name="Qiu W.G."/>
            <person name="Dunn J.J."/>
            <person name="Luft B.J."/>
            <person name="Fraser-Liggett C.M."/>
            <person name="Schutzer S.E."/>
        </authorList>
    </citation>
    <scope>NUCLEOTIDE SEQUENCE [LARGE SCALE GENOMIC DNA]</scope>
    <source>
        <strain>PKo</strain>
    </source>
</reference>
<keyword id="KW-0028">Amino-acid biosynthesis</keyword>
<keyword id="KW-0368">Histidine biosynthesis</keyword>
<keyword id="KW-0378">Hydrolase</keyword>
<keyword id="KW-0486">Methionine biosynthesis</keyword>
<keyword id="KW-0511">Multifunctional enzyme</keyword>
<keyword id="KW-0521">NADP</keyword>
<keyword id="KW-0554">One-carbon metabolism</keyword>
<keyword id="KW-0560">Oxidoreductase</keyword>
<keyword id="KW-0658">Purine biosynthesis</keyword>
<name>FOLD_BORAP</name>
<accession>Q0SPD8</accession>
<accession>G0IQ56</accession>
<proteinExistence type="inferred from homology"/>
<comment type="function">
    <text evidence="1">Catalyzes the oxidation of 5,10-methylenetetrahydrofolate to 5,10-methenyltetrahydrofolate and then the hydrolysis of 5,10-methenyltetrahydrofolate to 10-formyltetrahydrofolate.</text>
</comment>
<comment type="catalytic activity">
    <reaction evidence="1">
        <text>(6R)-5,10-methylene-5,6,7,8-tetrahydrofolate + NADP(+) = (6R)-5,10-methenyltetrahydrofolate + NADPH</text>
        <dbReference type="Rhea" id="RHEA:22812"/>
        <dbReference type="ChEBI" id="CHEBI:15636"/>
        <dbReference type="ChEBI" id="CHEBI:57455"/>
        <dbReference type="ChEBI" id="CHEBI:57783"/>
        <dbReference type="ChEBI" id="CHEBI:58349"/>
        <dbReference type="EC" id="1.5.1.5"/>
    </reaction>
</comment>
<comment type="catalytic activity">
    <reaction evidence="1">
        <text>(6R)-5,10-methenyltetrahydrofolate + H2O = (6R)-10-formyltetrahydrofolate + H(+)</text>
        <dbReference type="Rhea" id="RHEA:23700"/>
        <dbReference type="ChEBI" id="CHEBI:15377"/>
        <dbReference type="ChEBI" id="CHEBI:15378"/>
        <dbReference type="ChEBI" id="CHEBI:57455"/>
        <dbReference type="ChEBI" id="CHEBI:195366"/>
        <dbReference type="EC" id="3.5.4.9"/>
    </reaction>
</comment>
<comment type="pathway">
    <text evidence="1">One-carbon metabolism; tetrahydrofolate interconversion.</text>
</comment>
<comment type="subunit">
    <text evidence="1">Homodimer.</text>
</comment>
<comment type="similarity">
    <text evidence="1">Belongs to the tetrahydrofolate dehydrogenase/cyclohydrolase family.</text>
</comment>
<feature type="chain" id="PRO_0000268289" description="Bifunctional protein FolD">
    <location>
        <begin position="1"/>
        <end position="301"/>
    </location>
</feature>
<feature type="binding site" evidence="1">
    <location>
        <begin position="164"/>
        <end position="166"/>
    </location>
    <ligand>
        <name>NADP(+)</name>
        <dbReference type="ChEBI" id="CHEBI:58349"/>
    </ligand>
</feature>
<feature type="binding site" evidence="1">
    <location>
        <position position="191"/>
    </location>
    <ligand>
        <name>NADP(+)</name>
        <dbReference type="ChEBI" id="CHEBI:58349"/>
    </ligand>
</feature>
<feature type="binding site" evidence="1">
    <location>
        <position position="232"/>
    </location>
    <ligand>
        <name>NADP(+)</name>
        <dbReference type="ChEBI" id="CHEBI:58349"/>
    </ligand>
</feature>
<protein>
    <recommendedName>
        <fullName evidence="1">Bifunctional protein FolD</fullName>
    </recommendedName>
    <domain>
        <recommendedName>
            <fullName evidence="1">Methylenetetrahydrofolate dehydrogenase</fullName>
            <ecNumber evidence="1">1.5.1.5</ecNumber>
        </recommendedName>
    </domain>
    <domain>
        <recommendedName>
            <fullName evidence="1">Methenyltetrahydrofolate cyclohydrolase</fullName>
            <ecNumber evidence="1">3.5.4.9</ecNumber>
        </recommendedName>
    </domain>
</protein>
<organism>
    <name type="scientific">Borreliella afzelii (strain PKo)</name>
    <name type="common">Borrelia afzelii</name>
    <dbReference type="NCBI Taxonomy" id="390236"/>
    <lineage>
        <taxon>Bacteria</taxon>
        <taxon>Pseudomonadati</taxon>
        <taxon>Spirochaetota</taxon>
        <taxon>Spirochaetia</taxon>
        <taxon>Spirochaetales</taxon>
        <taxon>Borreliaceae</taxon>
        <taxon>Borreliella</taxon>
    </lineage>
</organism>
<sequence>MNTVFNGKDFANKYYLMLKEFLKERNLRNKITLKVVLANDEPASKLYVSIKNRVAKEIGLNVEVIKLSANSVQSDILEVIDRENKNLSTDGIIVQLPLLKGMDLNSILNGIVSSKDVDGLSFVNLGKMILGDKKGFVPCTALAVLKILRDEGIKTSGKTVVVVGRSPLVGRPISILLSSKPHDATVIACHSKSIYLDVYLRQADIIISAVGKPKLIDKSMLCGKPYVIDIGISEIETDAGKILSGDTDFDNIKDCVKFITPVKGGIGPVTVLMLMFNTIKAHLINNNMFDVLDRLEKLVEV</sequence>
<evidence type="ECO:0000255" key="1">
    <source>
        <dbReference type="HAMAP-Rule" id="MF_01576"/>
    </source>
</evidence>
<gene>
    <name evidence="1" type="primary">folD</name>
    <name type="ordered locus">BAPKO_0025</name>
    <name type="ordered locus">BafPKo_0026</name>
</gene>
<dbReference type="EC" id="1.5.1.5" evidence="1"/>
<dbReference type="EC" id="3.5.4.9" evidence="1"/>
<dbReference type="EMBL" id="CP000395">
    <property type="protein sequence ID" value="ABH01290.1"/>
    <property type="molecule type" value="Genomic_DNA"/>
</dbReference>
<dbReference type="EMBL" id="CP002933">
    <property type="protein sequence ID" value="AEL69260.1"/>
    <property type="molecule type" value="Genomic_DNA"/>
</dbReference>
<dbReference type="RefSeq" id="WP_011600787.1">
    <property type="nucleotide sequence ID" value="NZ_CP160066.1"/>
</dbReference>
<dbReference type="SMR" id="Q0SPD8"/>
<dbReference type="STRING" id="29518.BLA32_04150"/>
<dbReference type="KEGG" id="baf:BAPKO_0025"/>
<dbReference type="KEGG" id="bafz:BafPKo_0026"/>
<dbReference type="PATRIC" id="fig|390236.22.peg.26"/>
<dbReference type="eggNOG" id="COG0190">
    <property type="taxonomic scope" value="Bacteria"/>
</dbReference>
<dbReference type="HOGENOM" id="CLU_034045_2_0_12"/>
<dbReference type="OrthoDB" id="9803580at2"/>
<dbReference type="UniPathway" id="UPA00193"/>
<dbReference type="Proteomes" id="UP000005216">
    <property type="component" value="Chromosome"/>
</dbReference>
<dbReference type="GO" id="GO:0005829">
    <property type="term" value="C:cytosol"/>
    <property type="evidence" value="ECO:0007669"/>
    <property type="project" value="TreeGrafter"/>
</dbReference>
<dbReference type="GO" id="GO:0004477">
    <property type="term" value="F:methenyltetrahydrofolate cyclohydrolase activity"/>
    <property type="evidence" value="ECO:0007669"/>
    <property type="project" value="UniProtKB-UniRule"/>
</dbReference>
<dbReference type="GO" id="GO:0004488">
    <property type="term" value="F:methylenetetrahydrofolate dehydrogenase (NADP+) activity"/>
    <property type="evidence" value="ECO:0007669"/>
    <property type="project" value="UniProtKB-UniRule"/>
</dbReference>
<dbReference type="GO" id="GO:0000105">
    <property type="term" value="P:L-histidine biosynthetic process"/>
    <property type="evidence" value="ECO:0007669"/>
    <property type="project" value="UniProtKB-KW"/>
</dbReference>
<dbReference type="GO" id="GO:0009086">
    <property type="term" value="P:methionine biosynthetic process"/>
    <property type="evidence" value="ECO:0007669"/>
    <property type="project" value="UniProtKB-KW"/>
</dbReference>
<dbReference type="GO" id="GO:0006164">
    <property type="term" value="P:purine nucleotide biosynthetic process"/>
    <property type="evidence" value="ECO:0007669"/>
    <property type="project" value="UniProtKB-KW"/>
</dbReference>
<dbReference type="GO" id="GO:0035999">
    <property type="term" value="P:tetrahydrofolate interconversion"/>
    <property type="evidence" value="ECO:0007669"/>
    <property type="project" value="UniProtKB-UniRule"/>
</dbReference>
<dbReference type="CDD" id="cd01080">
    <property type="entry name" value="NAD_bind_m-THF_DH_Cyclohyd"/>
    <property type="match status" value="1"/>
</dbReference>
<dbReference type="Gene3D" id="3.40.50.10860">
    <property type="entry name" value="Leucine Dehydrogenase, chain A, domain 1"/>
    <property type="match status" value="1"/>
</dbReference>
<dbReference type="Gene3D" id="3.40.50.720">
    <property type="entry name" value="NAD(P)-binding Rossmann-like Domain"/>
    <property type="match status" value="1"/>
</dbReference>
<dbReference type="HAMAP" id="MF_01576">
    <property type="entry name" value="THF_DHG_CYH"/>
    <property type="match status" value="1"/>
</dbReference>
<dbReference type="InterPro" id="IPR046346">
    <property type="entry name" value="Aminoacid_DH-like_N_sf"/>
</dbReference>
<dbReference type="InterPro" id="IPR036291">
    <property type="entry name" value="NAD(P)-bd_dom_sf"/>
</dbReference>
<dbReference type="InterPro" id="IPR000672">
    <property type="entry name" value="THF_DH/CycHdrlase"/>
</dbReference>
<dbReference type="InterPro" id="IPR020630">
    <property type="entry name" value="THF_DH/CycHdrlase_cat_dom"/>
</dbReference>
<dbReference type="InterPro" id="IPR020631">
    <property type="entry name" value="THF_DH/CycHdrlase_NAD-bd_dom"/>
</dbReference>
<dbReference type="PANTHER" id="PTHR48099:SF5">
    <property type="entry name" value="C-1-TETRAHYDROFOLATE SYNTHASE, CYTOPLASMIC"/>
    <property type="match status" value="1"/>
</dbReference>
<dbReference type="PANTHER" id="PTHR48099">
    <property type="entry name" value="C-1-TETRAHYDROFOLATE SYNTHASE, CYTOPLASMIC-RELATED"/>
    <property type="match status" value="1"/>
</dbReference>
<dbReference type="Pfam" id="PF00763">
    <property type="entry name" value="THF_DHG_CYH"/>
    <property type="match status" value="1"/>
</dbReference>
<dbReference type="Pfam" id="PF02882">
    <property type="entry name" value="THF_DHG_CYH_C"/>
    <property type="match status" value="1"/>
</dbReference>
<dbReference type="PRINTS" id="PR00085">
    <property type="entry name" value="THFDHDRGNASE"/>
</dbReference>
<dbReference type="SUPFAM" id="SSF53223">
    <property type="entry name" value="Aminoacid dehydrogenase-like, N-terminal domain"/>
    <property type="match status" value="1"/>
</dbReference>
<dbReference type="SUPFAM" id="SSF51735">
    <property type="entry name" value="NAD(P)-binding Rossmann-fold domains"/>
    <property type="match status" value="1"/>
</dbReference>